<feature type="chain" id="PRO_0000229612" description="NAD kinase">
    <location>
        <begin position="1"/>
        <end position="297"/>
    </location>
</feature>
<feature type="active site" description="Proton acceptor" evidence="1">
    <location>
        <position position="74"/>
    </location>
</feature>
<feature type="binding site" evidence="1">
    <location>
        <begin position="74"/>
        <end position="75"/>
    </location>
    <ligand>
        <name>NAD(+)</name>
        <dbReference type="ChEBI" id="CHEBI:57540"/>
    </ligand>
</feature>
<feature type="binding site" evidence="1">
    <location>
        <position position="79"/>
    </location>
    <ligand>
        <name>NAD(+)</name>
        <dbReference type="ChEBI" id="CHEBI:57540"/>
    </ligand>
</feature>
<feature type="binding site" evidence="1">
    <location>
        <begin position="148"/>
        <end position="149"/>
    </location>
    <ligand>
        <name>NAD(+)</name>
        <dbReference type="ChEBI" id="CHEBI:57540"/>
    </ligand>
</feature>
<feature type="binding site" evidence="1">
    <location>
        <position position="176"/>
    </location>
    <ligand>
        <name>NAD(+)</name>
        <dbReference type="ChEBI" id="CHEBI:57540"/>
    </ligand>
</feature>
<feature type="binding site" evidence="1">
    <location>
        <position position="178"/>
    </location>
    <ligand>
        <name>NAD(+)</name>
        <dbReference type="ChEBI" id="CHEBI:57540"/>
    </ligand>
</feature>
<feature type="binding site" evidence="1">
    <location>
        <begin position="189"/>
        <end position="194"/>
    </location>
    <ligand>
        <name>NAD(+)</name>
        <dbReference type="ChEBI" id="CHEBI:57540"/>
    </ligand>
</feature>
<feature type="binding site" evidence="1">
    <location>
        <position position="248"/>
    </location>
    <ligand>
        <name>NAD(+)</name>
        <dbReference type="ChEBI" id="CHEBI:57540"/>
    </ligand>
</feature>
<reference key="1">
    <citation type="journal article" date="2005" name="Genome Res.">
        <title>Genome sequence of Blochmannia pennsylvanicus indicates parallel evolutionary trends among bacterial mutualists of insects.</title>
        <authorList>
            <person name="Degnan P.H."/>
            <person name="Lazarus A.B."/>
            <person name="Wernegreen J.J."/>
        </authorList>
    </citation>
    <scope>NUCLEOTIDE SEQUENCE [LARGE SCALE GENOMIC DNA]</scope>
    <source>
        <strain>BPEN</strain>
    </source>
</reference>
<comment type="function">
    <text evidence="1">Involved in the regulation of the intracellular balance of NAD and NADP, and is a key enzyme in the biosynthesis of NADP. Catalyzes specifically the phosphorylation on 2'-hydroxyl of the adenosine moiety of NAD to yield NADP.</text>
</comment>
<comment type="catalytic activity">
    <reaction evidence="1">
        <text>NAD(+) + ATP = ADP + NADP(+) + H(+)</text>
        <dbReference type="Rhea" id="RHEA:18629"/>
        <dbReference type="ChEBI" id="CHEBI:15378"/>
        <dbReference type="ChEBI" id="CHEBI:30616"/>
        <dbReference type="ChEBI" id="CHEBI:57540"/>
        <dbReference type="ChEBI" id="CHEBI:58349"/>
        <dbReference type="ChEBI" id="CHEBI:456216"/>
        <dbReference type="EC" id="2.7.1.23"/>
    </reaction>
</comment>
<comment type="cofactor">
    <cofactor evidence="1">
        <name>a divalent metal cation</name>
        <dbReference type="ChEBI" id="CHEBI:60240"/>
    </cofactor>
</comment>
<comment type="subcellular location">
    <subcellularLocation>
        <location evidence="1">Cytoplasm</location>
    </subcellularLocation>
</comment>
<comment type="similarity">
    <text evidence="1">Belongs to the NAD kinase family.</text>
</comment>
<keyword id="KW-0067">ATP-binding</keyword>
<keyword id="KW-0963">Cytoplasm</keyword>
<keyword id="KW-0418">Kinase</keyword>
<keyword id="KW-0520">NAD</keyword>
<keyword id="KW-0521">NADP</keyword>
<keyword id="KW-0547">Nucleotide-binding</keyword>
<keyword id="KW-1185">Reference proteome</keyword>
<keyword id="KW-0808">Transferase</keyword>
<gene>
    <name evidence="1" type="primary">nadK</name>
    <name type="ordered locus">BPEN_565</name>
</gene>
<name>NADK_BLOPB</name>
<dbReference type="EC" id="2.7.1.23" evidence="1"/>
<dbReference type="EMBL" id="CP000016">
    <property type="protein sequence ID" value="AAZ41175.1"/>
    <property type="molecule type" value="Genomic_DNA"/>
</dbReference>
<dbReference type="RefSeq" id="WP_011283086.1">
    <property type="nucleotide sequence ID" value="NC_007292.1"/>
</dbReference>
<dbReference type="SMR" id="Q492C6"/>
<dbReference type="STRING" id="291272.BPEN_565"/>
<dbReference type="KEGG" id="bpn:BPEN_565"/>
<dbReference type="eggNOG" id="COG0061">
    <property type="taxonomic scope" value="Bacteria"/>
</dbReference>
<dbReference type="HOGENOM" id="CLU_008831_0_1_6"/>
<dbReference type="OrthoDB" id="9774737at2"/>
<dbReference type="Proteomes" id="UP000007794">
    <property type="component" value="Chromosome"/>
</dbReference>
<dbReference type="GO" id="GO:0005737">
    <property type="term" value="C:cytoplasm"/>
    <property type="evidence" value="ECO:0007669"/>
    <property type="project" value="UniProtKB-SubCell"/>
</dbReference>
<dbReference type="GO" id="GO:0005524">
    <property type="term" value="F:ATP binding"/>
    <property type="evidence" value="ECO:0007669"/>
    <property type="project" value="UniProtKB-KW"/>
</dbReference>
<dbReference type="GO" id="GO:0046872">
    <property type="term" value="F:metal ion binding"/>
    <property type="evidence" value="ECO:0007669"/>
    <property type="project" value="UniProtKB-UniRule"/>
</dbReference>
<dbReference type="GO" id="GO:0051287">
    <property type="term" value="F:NAD binding"/>
    <property type="evidence" value="ECO:0007669"/>
    <property type="project" value="UniProtKB-ARBA"/>
</dbReference>
<dbReference type="GO" id="GO:0003951">
    <property type="term" value="F:NAD+ kinase activity"/>
    <property type="evidence" value="ECO:0007669"/>
    <property type="project" value="UniProtKB-UniRule"/>
</dbReference>
<dbReference type="GO" id="GO:0019674">
    <property type="term" value="P:NAD metabolic process"/>
    <property type="evidence" value="ECO:0007669"/>
    <property type="project" value="InterPro"/>
</dbReference>
<dbReference type="GO" id="GO:0006741">
    <property type="term" value="P:NADP biosynthetic process"/>
    <property type="evidence" value="ECO:0007669"/>
    <property type="project" value="UniProtKB-UniRule"/>
</dbReference>
<dbReference type="FunFam" id="2.60.200.30:FF:000009">
    <property type="entry name" value="Poly(P)/ATP NAD kinase"/>
    <property type="match status" value="1"/>
</dbReference>
<dbReference type="Gene3D" id="3.40.50.10330">
    <property type="entry name" value="Probable inorganic polyphosphate/atp-NAD kinase, domain 1"/>
    <property type="match status" value="1"/>
</dbReference>
<dbReference type="Gene3D" id="2.60.200.30">
    <property type="entry name" value="Probable inorganic polyphosphate/atp-NAD kinase, domain 2"/>
    <property type="match status" value="1"/>
</dbReference>
<dbReference type="HAMAP" id="MF_00361">
    <property type="entry name" value="NAD_kinase"/>
    <property type="match status" value="1"/>
</dbReference>
<dbReference type="InterPro" id="IPR017438">
    <property type="entry name" value="ATP-NAD_kinase_N"/>
</dbReference>
<dbReference type="InterPro" id="IPR017437">
    <property type="entry name" value="ATP-NAD_kinase_PpnK-typ_C"/>
</dbReference>
<dbReference type="InterPro" id="IPR000595">
    <property type="entry name" value="cNMP-bd_dom"/>
</dbReference>
<dbReference type="InterPro" id="IPR016064">
    <property type="entry name" value="NAD/diacylglycerol_kinase_sf"/>
</dbReference>
<dbReference type="InterPro" id="IPR002504">
    <property type="entry name" value="NADK"/>
</dbReference>
<dbReference type="NCBIfam" id="NF002306">
    <property type="entry name" value="PRK01231.1"/>
    <property type="match status" value="1"/>
</dbReference>
<dbReference type="NCBIfam" id="NF002893">
    <property type="entry name" value="PRK03378.1"/>
    <property type="match status" value="1"/>
</dbReference>
<dbReference type="PANTHER" id="PTHR20275">
    <property type="entry name" value="NAD KINASE"/>
    <property type="match status" value="1"/>
</dbReference>
<dbReference type="PANTHER" id="PTHR20275:SF0">
    <property type="entry name" value="NAD KINASE"/>
    <property type="match status" value="1"/>
</dbReference>
<dbReference type="Pfam" id="PF01513">
    <property type="entry name" value="NAD_kinase"/>
    <property type="match status" value="1"/>
</dbReference>
<dbReference type="Pfam" id="PF20143">
    <property type="entry name" value="NAD_kinase_C"/>
    <property type="match status" value="1"/>
</dbReference>
<dbReference type="SUPFAM" id="SSF111331">
    <property type="entry name" value="NAD kinase/diacylglycerol kinase-like"/>
    <property type="match status" value="1"/>
</dbReference>
<accession>Q492C6</accession>
<evidence type="ECO:0000255" key="1">
    <source>
        <dbReference type="HAMAP-Rule" id="MF_00361"/>
    </source>
</evidence>
<organism>
    <name type="scientific">Blochmanniella pennsylvanica (strain BPEN)</name>
    <dbReference type="NCBI Taxonomy" id="291272"/>
    <lineage>
        <taxon>Bacteria</taxon>
        <taxon>Pseudomonadati</taxon>
        <taxon>Pseudomonadota</taxon>
        <taxon>Gammaproteobacteria</taxon>
        <taxon>Enterobacterales</taxon>
        <taxon>Enterobacteriaceae</taxon>
        <taxon>ant endosymbionts</taxon>
        <taxon>Candidatus Blochmanniella</taxon>
    </lineage>
</organism>
<proteinExistence type="inferred from homology"/>
<protein>
    <recommendedName>
        <fullName evidence="1">NAD kinase</fullName>
        <ecNumber evidence="1">2.7.1.23</ecNumber>
    </recommendedName>
    <alternativeName>
        <fullName evidence="1">ATP-dependent NAD kinase</fullName>
    </alternativeName>
</protein>
<sequence>MTSSIFRTIGIIGYSRHPKAVHTYDILYHWLYSKGITVIIEHHAASLLNVQKAVVGDLNDIGNYADLAIVIGGDGNMLRAANILAQHDIKVIGINRGTLGFLTDLDPNSALVELSDVLSGHFINEKRFLLDVTVQRYNKLIRLGSAINEVILHTNTIRDMIEFELYIDDNFIFSQRSDGLIISTPTGSTAYALSAGGPILSPTVDAILLVPICPHTLSSRPVVINSKSIICLKFSKVTSELKIGYDNQTPVLVCKEEEIFIKRSNHYLDLIHPNNYNYFKTLNIKLGWSQNIAETKK</sequence>